<feature type="chain" id="PRO_1000202538" description="Translation initiation factor IF-3">
    <location>
        <begin position="1"/>
        <end position="210"/>
    </location>
</feature>
<feature type="region of interest" description="Disordered" evidence="2">
    <location>
        <begin position="169"/>
        <end position="210"/>
    </location>
</feature>
<feature type="compositionally biased region" description="Basic and acidic residues" evidence="2">
    <location>
        <begin position="176"/>
        <end position="186"/>
    </location>
</feature>
<feature type="compositionally biased region" description="Low complexity" evidence="2">
    <location>
        <begin position="187"/>
        <end position="210"/>
    </location>
</feature>
<organism>
    <name type="scientific">Deinococcus deserti (strain DSM 17065 / CIP 109153 / LMG 22923 / VCD115)</name>
    <dbReference type="NCBI Taxonomy" id="546414"/>
    <lineage>
        <taxon>Bacteria</taxon>
        <taxon>Thermotogati</taxon>
        <taxon>Deinococcota</taxon>
        <taxon>Deinococci</taxon>
        <taxon>Deinococcales</taxon>
        <taxon>Deinococcaceae</taxon>
        <taxon>Deinococcus</taxon>
    </lineage>
</organism>
<comment type="function">
    <text evidence="1">IF-3 binds to the 30S ribosomal subunit and shifts the equilibrium between 70S ribosomes and their 50S and 30S subunits in favor of the free subunits, thus enhancing the availability of 30S subunits on which protein synthesis initiation begins.</text>
</comment>
<comment type="subunit">
    <text evidence="1">Monomer.</text>
</comment>
<comment type="subcellular location">
    <subcellularLocation>
        <location evidence="1">Cytoplasm</location>
    </subcellularLocation>
</comment>
<comment type="similarity">
    <text evidence="1">Belongs to the IF-3 family.</text>
</comment>
<proteinExistence type="inferred from homology"/>
<sequence length="210" mass="23567">MINIAKEHKVNEQIRVRQIRLIGGEGEQIGIIDTRDAMNMAREKGLDLVMVSPQAVPPVCRLLDYGRFRYEQQQNEKENRKRVRSQEVKAIKFRVKIDDHDFKTKTGHVRRFLDDGHKVKVTIMFRGRERTHPELGERILVRVAEALADVGTPEGMPSMMGMDMNMIMAPKQAPAPKKERTEESAEKAGSAGETEPVPAASAAAEAPANV</sequence>
<gene>
    <name evidence="1" type="primary">infC</name>
    <name type="ordered locus">Deide_06380</name>
</gene>
<accession>C1D0V9</accession>
<evidence type="ECO:0000255" key="1">
    <source>
        <dbReference type="HAMAP-Rule" id="MF_00080"/>
    </source>
</evidence>
<evidence type="ECO:0000256" key="2">
    <source>
        <dbReference type="SAM" id="MobiDB-lite"/>
    </source>
</evidence>
<keyword id="KW-0963">Cytoplasm</keyword>
<keyword id="KW-0396">Initiation factor</keyword>
<keyword id="KW-0648">Protein biosynthesis</keyword>
<keyword id="KW-1185">Reference proteome</keyword>
<dbReference type="EMBL" id="CP001114">
    <property type="protein sequence ID" value="ACO45483.1"/>
    <property type="molecule type" value="Genomic_DNA"/>
</dbReference>
<dbReference type="RefSeq" id="WP_012692606.1">
    <property type="nucleotide sequence ID" value="NC_012526.1"/>
</dbReference>
<dbReference type="SMR" id="C1D0V9"/>
<dbReference type="STRING" id="546414.Deide_06380"/>
<dbReference type="PaxDb" id="546414-Deide_06380"/>
<dbReference type="KEGG" id="ddr:Deide_06380"/>
<dbReference type="eggNOG" id="COG0290">
    <property type="taxonomic scope" value="Bacteria"/>
</dbReference>
<dbReference type="HOGENOM" id="CLU_054919_3_1_0"/>
<dbReference type="OrthoDB" id="9806014at2"/>
<dbReference type="Proteomes" id="UP000002208">
    <property type="component" value="Chromosome"/>
</dbReference>
<dbReference type="GO" id="GO:0005829">
    <property type="term" value="C:cytosol"/>
    <property type="evidence" value="ECO:0007669"/>
    <property type="project" value="TreeGrafter"/>
</dbReference>
<dbReference type="GO" id="GO:0016020">
    <property type="term" value="C:membrane"/>
    <property type="evidence" value="ECO:0007669"/>
    <property type="project" value="TreeGrafter"/>
</dbReference>
<dbReference type="GO" id="GO:0043022">
    <property type="term" value="F:ribosome binding"/>
    <property type="evidence" value="ECO:0007669"/>
    <property type="project" value="TreeGrafter"/>
</dbReference>
<dbReference type="GO" id="GO:0003743">
    <property type="term" value="F:translation initiation factor activity"/>
    <property type="evidence" value="ECO:0007669"/>
    <property type="project" value="UniProtKB-UniRule"/>
</dbReference>
<dbReference type="GO" id="GO:0032790">
    <property type="term" value="P:ribosome disassembly"/>
    <property type="evidence" value="ECO:0007669"/>
    <property type="project" value="TreeGrafter"/>
</dbReference>
<dbReference type="FunFam" id="3.10.20.80:FF:000001">
    <property type="entry name" value="Translation initiation factor IF-3"/>
    <property type="match status" value="1"/>
</dbReference>
<dbReference type="FunFam" id="3.30.110.10:FF:000001">
    <property type="entry name" value="Translation initiation factor IF-3"/>
    <property type="match status" value="1"/>
</dbReference>
<dbReference type="Gene3D" id="3.30.110.10">
    <property type="entry name" value="Translation initiation factor 3 (IF-3), C-terminal domain"/>
    <property type="match status" value="1"/>
</dbReference>
<dbReference type="Gene3D" id="3.10.20.80">
    <property type="entry name" value="Translation initiation factor 3 (IF-3), N-terminal domain"/>
    <property type="match status" value="1"/>
</dbReference>
<dbReference type="HAMAP" id="MF_00080">
    <property type="entry name" value="IF_3"/>
    <property type="match status" value="1"/>
</dbReference>
<dbReference type="InterPro" id="IPR036788">
    <property type="entry name" value="T_IF-3_C_sf"/>
</dbReference>
<dbReference type="InterPro" id="IPR036787">
    <property type="entry name" value="T_IF-3_N_sf"/>
</dbReference>
<dbReference type="InterPro" id="IPR019813">
    <property type="entry name" value="Translation_initiation_fac3_CS"/>
</dbReference>
<dbReference type="InterPro" id="IPR001288">
    <property type="entry name" value="Translation_initiation_fac_3"/>
</dbReference>
<dbReference type="InterPro" id="IPR019815">
    <property type="entry name" value="Translation_initiation_fac_3_C"/>
</dbReference>
<dbReference type="InterPro" id="IPR019814">
    <property type="entry name" value="Translation_initiation_fac_3_N"/>
</dbReference>
<dbReference type="NCBIfam" id="TIGR00168">
    <property type="entry name" value="infC"/>
    <property type="match status" value="1"/>
</dbReference>
<dbReference type="PANTHER" id="PTHR10938">
    <property type="entry name" value="TRANSLATION INITIATION FACTOR IF-3"/>
    <property type="match status" value="1"/>
</dbReference>
<dbReference type="PANTHER" id="PTHR10938:SF0">
    <property type="entry name" value="TRANSLATION INITIATION FACTOR IF-3, MITOCHONDRIAL"/>
    <property type="match status" value="1"/>
</dbReference>
<dbReference type="Pfam" id="PF00707">
    <property type="entry name" value="IF3_C"/>
    <property type="match status" value="1"/>
</dbReference>
<dbReference type="Pfam" id="PF05198">
    <property type="entry name" value="IF3_N"/>
    <property type="match status" value="1"/>
</dbReference>
<dbReference type="SUPFAM" id="SSF55200">
    <property type="entry name" value="Translation initiation factor IF3, C-terminal domain"/>
    <property type="match status" value="1"/>
</dbReference>
<dbReference type="SUPFAM" id="SSF54364">
    <property type="entry name" value="Translation initiation factor IF3, N-terminal domain"/>
    <property type="match status" value="1"/>
</dbReference>
<dbReference type="PROSITE" id="PS00938">
    <property type="entry name" value="IF3"/>
    <property type="match status" value="1"/>
</dbReference>
<reference key="1">
    <citation type="journal article" date="2009" name="PLoS Genet.">
        <title>Alliance of proteomics and genomics to unravel the specificities of Sahara bacterium Deinococcus deserti.</title>
        <authorList>
            <person name="de Groot A."/>
            <person name="Dulermo R."/>
            <person name="Ortet P."/>
            <person name="Blanchard L."/>
            <person name="Guerin P."/>
            <person name="Fernandez B."/>
            <person name="Vacherie B."/>
            <person name="Dossat C."/>
            <person name="Jolivet E."/>
            <person name="Siguier P."/>
            <person name="Chandler M."/>
            <person name="Barakat M."/>
            <person name="Dedieu A."/>
            <person name="Barbe V."/>
            <person name="Heulin T."/>
            <person name="Sommer S."/>
            <person name="Achouak W."/>
            <person name="Armengaud J."/>
        </authorList>
    </citation>
    <scope>NUCLEOTIDE SEQUENCE [LARGE SCALE GENOMIC DNA]</scope>
    <source>
        <strain>DSM 17065 / CIP 109153 / LMG 22923 / VCD115</strain>
    </source>
</reference>
<name>IF3_DEIDV</name>
<protein>
    <recommendedName>
        <fullName evidence="1">Translation initiation factor IF-3</fullName>
    </recommendedName>
</protein>